<organism>
    <name type="scientific">Shewanella putrefaciens (strain CN-32 / ATCC BAA-453)</name>
    <dbReference type="NCBI Taxonomy" id="319224"/>
    <lineage>
        <taxon>Bacteria</taxon>
        <taxon>Pseudomonadati</taxon>
        <taxon>Pseudomonadota</taxon>
        <taxon>Gammaproteobacteria</taxon>
        <taxon>Alteromonadales</taxon>
        <taxon>Shewanellaceae</taxon>
        <taxon>Shewanella</taxon>
    </lineage>
</organism>
<reference key="1">
    <citation type="submission" date="2007-04" db="EMBL/GenBank/DDBJ databases">
        <title>Complete sequence of Shewanella putrefaciens CN-32.</title>
        <authorList>
            <consortium name="US DOE Joint Genome Institute"/>
            <person name="Copeland A."/>
            <person name="Lucas S."/>
            <person name="Lapidus A."/>
            <person name="Barry K."/>
            <person name="Detter J.C."/>
            <person name="Glavina del Rio T."/>
            <person name="Hammon N."/>
            <person name="Israni S."/>
            <person name="Dalin E."/>
            <person name="Tice H."/>
            <person name="Pitluck S."/>
            <person name="Chain P."/>
            <person name="Malfatti S."/>
            <person name="Shin M."/>
            <person name="Vergez L."/>
            <person name="Schmutz J."/>
            <person name="Larimer F."/>
            <person name="Land M."/>
            <person name="Hauser L."/>
            <person name="Kyrpides N."/>
            <person name="Mikhailova N."/>
            <person name="Romine M.F."/>
            <person name="Fredrickson J."/>
            <person name="Tiedje J."/>
            <person name="Richardson P."/>
        </authorList>
    </citation>
    <scope>NUCLEOTIDE SEQUENCE [LARGE SCALE GENOMIC DNA]</scope>
    <source>
        <strain>CN-32 / ATCC BAA-453</strain>
    </source>
</reference>
<keyword id="KW-0067">ATP-binding</keyword>
<keyword id="KW-0119">Carbohydrate metabolism</keyword>
<keyword id="KW-0320">Glycogen biosynthesis</keyword>
<keyword id="KW-0321">Glycogen metabolism</keyword>
<keyword id="KW-0547">Nucleotide-binding</keyword>
<keyword id="KW-0548">Nucleotidyltransferase</keyword>
<keyword id="KW-0808">Transferase</keyword>
<comment type="function">
    <text evidence="1">Involved in the biosynthesis of ADP-glucose, a building block required for the elongation reactions to produce glycogen. Catalyzes the reaction between ATP and alpha-D-glucose 1-phosphate (G1P) to produce pyrophosphate and ADP-Glc.</text>
</comment>
<comment type="catalytic activity">
    <reaction evidence="1">
        <text>alpha-D-glucose 1-phosphate + ATP + H(+) = ADP-alpha-D-glucose + diphosphate</text>
        <dbReference type="Rhea" id="RHEA:12120"/>
        <dbReference type="ChEBI" id="CHEBI:15378"/>
        <dbReference type="ChEBI" id="CHEBI:30616"/>
        <dbReference type="ChEBI" id="CHEBI:33019"/>
        <dbReference type="ChEBI" id="CHEBI:57498"/>
        <dbReference type="ChEBI" id="CHEBI:58601"/>
        <dbReference type="EC" id="2.7.7.27"/>
    </reaction>
</comment>
<comment type="pathway">
    <text evidence="1">Glycan biosynthesis; glycogen biosynthesis.</text>
</comment>
<comment type="subunit">
    <text evidence="1">Homotetramer.</text>
</comment>
<comment type="similarity">
    <text evidence="1">Belongs to the bacterial/plant glucose-1-phosphate adenylyltransferase family.</text>
</comment>
<dbReference type="EC" id="2.7.7.27" evidence="1"/>
<dbReference type="EMBL" id="CP000681">
    <property type="protein sequence ID" value="ABP74979.1"/>
    <property type="molecule type" value="Genomic_DNA"/>
</dbReference>
<dbReference type="SMR" id="A4Y4U6"/>
<dbReference type="STRING" id="319224.Sputcn32_1251"/>
<dbReference type="KEGG" id="spc:Sputcn32_1251"/>
<dbReference type="eggNOG" id="COG0448">
    <property type="taxonomic scope" value="Bacteria"/>
</dbReference>
<dbReference type="HOGENOM" id="CLU_029499_14_1_6"/>
<dbReference type="UniPathway" id="UPA00164"/>
<dbReference type="GO" id="GO:0005524">
    <property type="term" value="F:ATP binding"/>
    <property type="evidence" value="ECO:0007669"/>
    <property type="project" value="UniProtKB-KW"/>
</dbReference>
<dbReference type="GO" id="GO:0008878">
    <property type="term" value="F:glucose-1-phosphate adenylyltransferase activity"/>
    <property type="evidence" value="ECO:0007669"/>
    <property type="project" value="UniProtKB-UniRule"/>
</dbReference>
<dbReference type="GO" id="GO:0005978">
    <property type="term" value="P:glycogen biosynthetic process"/>
    <property type="evidence" value="ECO:0007669"/>
    <property type="project" value="UniProtKB-UniRule"/>
</dbReference>
<dbReference type="CDD" id="cd02508">
    <property type="entry name" value="ADP_Glucose_PP"/>
    <property type="match status" value="1"/>
</dbReference>
<dbReference type="CDD" id="cd04651">
    <property type="entry name" value="LbH_G1P_AT_C"/>
    <property type="match status" value="1"/>
</dbReference>
<dbReference type="Gene3D" id="2.160.10.10">
    <property type="entry name" value="Hexapeptide repeat proteins"/>
    <property type="match status" value="1"/>
</dbReference>
<dbReference type="Gene3D" id="3.90.550.10">
    <property type="entry name" value="Spore Coat Polysaccharide Biosynthesis Protein SpsA, Chain A"/>
    <property type="match status" value="1"/>
</dbReference>
<dbReference type="HAMAP" id="MF_00624">
    <property type="entry name" value="GlgC"/>
    <property type="match status" value="1"/>
</dbReference>
<dbReference type="InterPro" id="IPR011831">
    <property type="entry name" value="ADP-Glc_PPase"/>
</dbReference>
<dbReference type="InterPro" id="IPR005836">
    <property type="entry name" value="ADP_Glu_pyroP_CS"/>
</dbReference>
<dbReference type="InterPro" id="IPR023049">
    <property type="entry name" value="GlgC_bac"/>
</dbReference>
<dbReference type="InterPro" id="IPR056818">
    <property type="entry name" value="GlmU/GlgC-like_hexapep"/>
</dbReference>
<dbReference type="InterPro" id="IPR005835">
    <property type="entry name" value="NTP_transferase_dom"/>
</dbReference>
<dbReference type="InterPro" id="IPR029044">
    <property type="entry name" value="Nucleotide-diphossugar_trans"/>
</dbReference>
<dbReference type="InterPro" id="IPR011004">
    <property type="entry name" value="Trimer_LpxA-like_sf"/>
</dbReference>
<dbReference type="NCBIfam" id="TIGR02091">
    <property type="entry name" value="glgC"/>
    <property type="match status" value="1"/>
</dbReference>
<dbReference type="NCBIfam" id="NF001947">
    <property type="entry name" value="PRK00725.1"/>
    <property type="match status" value="1"/>
</dbReference>
<dbReference type="NCBIfam" id="NF002023">
    <property type="entry name" value="PRK00844.1"/>
    <property type="match status" value="1"/>
</dbReference>
<dbReference type="PANTHER" id="PTHR43523:SF2">
    <property type="entry name" value="GLUCOSE-1-PHOSPHATE ADENYLYLTRANSFERASE"/>
    <property type="match status" value="1"/>
</dbReference>
<dbReference type="PANTHER" id="PTHR43523">
    <property type="entry name" value="GLUCOSE-1-PHOSPHATE ADENYLYLTRANSFERASE-RELATED"/>
    <property type="match status" value="1"/>
</dbReference>
<dbReference type="Pfam" id="PF24894">
    <property type="entry name" value="Hexapep_GlmU"/>
    <property type="match status" value="1"/>
</dbReference>
<dbReference type="Pfam" id="PF00483">
    <property type="entry name" value="NTP_transferase"/>
    <property type="match status" value="1"/>
</dbReference>
<dbReference type="SUPFAM" id="SSF53448">
    <property type="entry name" value="Nucleotide-diphospho-sugar transferases"/>
    <property type="match status" value="1"/>
</dbReference>
<dbReference type="SUPFAM" id="SSF51161">
    <property type="entry name" value="Trimeric LpxA-like enzymes"/>
    <property type="match status" value="1"/>
</dbReference>
<dbReference type="PROSITE" id="PS00808">
    <property type="entry name" value="ADP_GLC_PYROPHOSPH_1"/>
    <property type="match status" value="1"/>
</dbReference>
<dbReference type="PROSITE" id="PS00809">
    <property type="entry name" value="ADP_GLC_PYROPHOSPH_2"/>
    <property type="match status" value="1"/>
</dbReference>
<dbReference type="PROSITE" id="PS00810">
    <property type="entry name" value="ADP_GLC_PYROPHOSPH_3"/>
    <property type="match status" value="1"/>
</dbReference>
<name>GLGC_SHEPC</name>
<evidence type="ECO:0000255" key="1">
    <source>
        <dbReference type="HAMAP-Rule" id="MF_00624"/>
    </source>
</evidence>
<protein>
    <recommendedName>
        <fullName evidence="1">Glucose-1-phosphate adenylyltransferase</fullName>
        <ecNumber evidence="1">2.7.7.27</ecNumber>
    </recommendedName>
    <alternativeName>
        <fullName evidence="1">ADP-glucose pyrophosphorylase</fullName>
        <shortName evidence="1">ADPGlc PPase</shortName>
    </alternativeName>
    <alternativeName>
        <fullName evidence="1">ADP-glucose synthase</fullName>
    </alternativeName>
</protein>
<proteinExistence type="inferred from homology"/>
<accession>A4Y4U6</accession>
<gene>
    <name evidence="1" type="primary">glgC</name>
    <name type="ordered locus">Sputcn32_1251</name>
</gene>
<sequence>MSNVRYISNLTRETYALILAGGRGSRLHELTDWRAKPALYFGGKFRIIDFPLSNCINSGVRRVGVVTQYKSHSLIRHVMRGWGHFKKELGESVEILPASQRFSENWYQGTADAVFQNIDIIRHELPKYVMVLSGDHVYRMDYAGILAAHAESGADMTVSCLEVPIAEAAGAFGVIEVDDNMRILGFEEKPQRPKPSPDNPEMCLASMGNYVFNTEFLFEQLKKDSQNATSDRDFGKDIIPSIIEKHNVFAYPFKSPFPNEQAYWRDVGTLDSFWQANMELLSPTPALNLYDAKWPIWTFQEQLPPAKFVFDDDDRRGMALDSIVSSGCIISGATVRRSVLFNEVRVCSYSVVEDSVVLPDVVVLRHCKIKNAIIDRGCIIPEGTVIGYNHDHDRAKGFRVSEKGVTLVTRDMLGLPVGYE</sequence>
<feature type="chain" id="PRO_1000051584" description="Glucose-1-phosphate adenylyltransferase">
    <location>
        <begin position="1"/>
        <end position="420"/>
    </location>
</feature>
<feature type="binding site" evidence="1">
    <location>
        <position position="107"/>
    </location>
    <ligand>
        <name>alpha-D-glucose 1-phosphate</name>
        <dbReference type="ChEBI" id="CHEBI:58601"/>
    </ligand>
</feature>
<feature type="binding site" evidence="1">
    <location>
        <position position="173"/>
    </location>
    <ligand>
        <name>alpha-D-glucose 1-phosphate</name>
        <dbReference type="ChEBI" id="CHEBI:58601"/>
    </ligand>
</feature>
<feature type="binding site" evidence="1">
    <location>
        <begin position="188"/>
        <end position="189"/>
    </location>
    <ligand>
        <name>alpha-D-glucose 1-phosphate</name>
        <dbReference type="ChEBI" id="CHEBI:58601"/>
    </ligand>
</feature>
<feature type="binding site" evidence="1">
    <location>
        <position position="206"/>
    </location>
    <ligand>
        <name>alpha-D-glucose 1-phosphate</name>
        <dbReference type="ChEBI" id="CHEBI:58601"/>
    </ligand>
</feature>